<reference key="1">
    <citation type="journal article" date="1995" name="Nature">
        <title>Mechanosensory signalling in C. elegans mediated by the GLR-1 glutamate receptor.</title>
        <authorList>
            <person name="Maricq A.V."/>
            <person name="Peckol E."/>
            <person name="Driscoll M."/>
            <person name="Bargmann C.I."/>
        </authorList>
    </citation>
    <scope>NUCLEOTIDE SEQUENCE [MRNA]</scope>
    <scope>FUNCTION</scope>
    <scope>TISSUE SPECIFICITY</scope>
    <source>
        <strain>Bristol N2</strain>
    </source>
</reference>
<reference key="2">
    <citation type="journal article" date="1994" name="Nature">
        <title>2.2 Mb of contiguous nucleotide sequence from chromosome III of C. elegans.</title>
        <authorList>
            <person name="Wilson R."/>
            <person name="Ainscough R."/>
            <person name="Anderson K."/>
            <person name="Baynes C."/>
            <person name="Berks M."/>
            <person name="Bonfield J."/>
            <person name="Burton J."/>
            <person name="Connell M."/>
            <person name="Copsey T."/>
            <person name="Cooper J."/>
            <person name="Coulson A."/>
            <person name="Craxton M."/>
            <person name="Dear S."/>
            <person name="Du Z."/>
            <person name="Durbin R."/>
            <person name="Favello A."/>
            <person name="Fraser A."/>
            <person name="Fulton L."/>
            <person name="Gardner A."/>
            <person name="Green P."/>
            <person name="Hawkins T."/>
            <person name="Hillier L."/>
            <person name="Jier M."/>
            <person name="Johnston L."/>
            <person name="Jones M."/>
            <person name="Kershaw J."/>
            <person name="Kirsten J."/>
            <person name="Laisster N."/>
            <person name="Latreille P."/>
            <person name="Lightning J."/>
            <person name="Lloyd C."/>
            <person name="Mortimore B."/>
            <person name="O'Callaghan M."/>
            <person name="Parsons J."/>
            <person name="Percy C."/>
            <person name="Rifken L."/>
            <person name="Roopra A."/>
            <person name="Saunders D."/>
            <person name="Shownkeen R."/>
            <person name="Sims M."/>
            <person name="Smaldon N."/>
            <person name="Smith A."/>
            <person name="Smith M."/>
            <person name="Sonnhammer E."/>
            <person name="Staden R."/>
            <person name="Sulston J."/>
            <person name="Thierry-Mieg J."/>
            <person name="Thomas K."/>
            <person name="Vaudin M."/>
            <person name="Vaughan K."/>
            <person name="Waterston R."/>
            <person name="Watson A."/>
            <person name="Weinstock L."/>
            <person name="Wilkinson-Sproat J."/>
            <person name="Wohldman P."/>
        </authorList>
    </citation>
    <scope>NUCLEOTIDE SEQUENCE [LARGE SCALE GENOMIC DNA]</scope>
    <source>
        <strain>Bristol N2</strain>
    </source>
</reference>
<reference key="3">
    <citation type="journal article" date="1998" name="Science">
        <title>Genome sequence of the nematode C. elegans: a platform for investigating biology.</title>
        <authorList>
            <consortium name="The C. elegans sequencing consortium"/>
        </authorList>
    </citation>
    <scope>NUCLEOTIDE SEQUENCE [LARGE SCALE GENOMIC DNA]</scope>
    <source>
        <strain>Bristol N2</strain>
    </source>
</reference>
<reference key="4">
    <citation type="journal article" date="2001" name="J. Neurosci.">
        <title>Differential expression of glutamate receptor subunits in the nervous system of Caenorhabditis elegans and their regulation by the homeodomain protein UNC-42.</title>
        <authorList>
            <person name="Brockie P.J."/>
            <person name="Madsen D.M."/>
            <person name="Zheng Y."/>
            <person name="Mellem J."/>
            <person name="Maricq A.V."/>
        </authorList>
    </citation>
    <scope>TISSUE SPECIFICITY</scope>
</reference>
<reference key="5">
    <citation type="journal article" date="2002" name="Neuron">
        <title>Ubiquitin and AP180 regulate the abundance of GLR-1 glutamate receptors at postsynaptic elements in C. elegans.</title>
        <authorList>
            <person name="Burbea M."/>
            <person name="Dreier L."/>
            <person name="Dittman J.S."/>
            <person name="Grunwald M.E."/>
            <person name="Kaplan J.M."/>
        </authorList>
    </citation>
    <scope>SUBCELLULAR LOCATION</scope>
    <scope>UBIQUITINATION</scope>
    <scope>MUTAGENESIS OF LYS-888</scope>
</reference>
<reference key="6">
    <citation type="journal article" date="2004" name="Nature">
        <title>SOL-1 is a CUB-domain protein required for GLR-1 glutamate receptor function in C. elegans.</title>
        <authorList>
            <person name="Zheng Y."/>
            <person name="Mellem J.E."/>
            <person name="Brockie P.J."/>
            <person name="Madsen D.M."/>
            <person name="Maricq A.V."/>
        </authorList>
    </citation>
    <scope>INTERACTION WITH SOL-1</scope>
</reference>
<reference key="7">
    <citation type="journal article" date="2007" name="Mol. Biol. Cell">
        <title>CDK-5 regulates the abundance of GLR-1 glutamate receptors in the ventral cord of Caenorhabditis elegans.</title>
        <authorList>
            <person name="Juo P."/>
            <person name="Harbaugh T."/>
            <person name="Garriga G."/>
            <person name="Kaplan J.M."/>
        </authorList>
    </citation>
    <scope>SUBCELLULAR LOCATION</scope>
</reference>
<reference key="8">
    <citation type="journal article" date="2012" name="EMBO J.">
        <title>Hypoxia regulates glutamate receptor trafficking through an HIF-independent mechanism.</title>
        <authorList>
            <person name="Park E.C."/>
            <person name="Ghose P."/>
            <person name="Shao Z."/>
            <person name="Ye Q."/>
            <person name="Kang L."/>
            <person name="Xu X.Z."/>
            <person name="Powell-Coffman J.A."/>
            <person name="Rongo C."/>
        </authorList>
    </citation>
    <scope>SUBCELLULAR LOCATION</scope>
</reference>
<reference key="9">
    <citation type="journal article" date="2012" name="J. Cell Biol.">
        <title>RAB-6.2 and the retromer regulate glutamate receptor recycling through a retrograde pathway.</title>
        <authorList>
            <person name="Zhang D."/>
            <person name="Isack N.R."/>
            <person name="Glodowski D.R."/>
            <person name="Liu J."/>
            <person name="Chen C.C."/>
            <person name="Xu X.Z."/>
            <person name="Grant B.D."/>
            <person name="Rongo C."/>
        </authorList>
    </citation>
    <scope>SUBCELLULAR LOCATION</scope>
</reference>
<reference key="10">
    <citation type="journal article" date="2013" name="Neuron">
        <title>Cornichons control ER export of AMPA receptors to regulate synaptic excitability.</title>
        <authorList>
            <person name="Brockie P.J."/>
            <person name="Jensen M."/>
            <person name="Mellem J.E."/>
            <person name="Jensen E."/>
            <person name="Yamasaki T."/>
            <person name="Wang R."/>
            <person name="Maxfield D."/>
            <person name="Thacker C."/>
            <person name="Hoerndli F."/>
            <person name="Dunn P.J."/>
            <person name="Tomita S."/>
            <person name="Madsen D.M."/>
            <person name="Maricq A.V."/>
        </authorList>
    </citation>
    <scope>INTERACTION WITH CNI-1</scope>
    <scope>SUBCELLULAR LOCATION</scope>
    <scope>GLYCOSYLATION</scope>
    <scope>DISRUPTION PHENOTYPE</scope>
</reference>
<reference key="11">
    <citation type="journal article" date="2014" name="J. Biol. Chem.">
        <title>The WD40-repeat proteins WDR-20 and WDR-48 bind and activate the deubiquitinating enzyme USP-46 to promote the abundance of the glutamate receptor GLR-1 in the ventral nerve cord of Caenorhabditis elegans.</title>
        <authorList>
            <person name="Dahlberg C.L."/>
            <person name="Juo P."/>
        </authorList>
    </citation>
    <scope>INTERACTION WITH USP-46</scope>
    <scope>SUBCELLULAR LOCATION</scope>
    <scope>DEUBIQUITINATION BY USP46</scope>
</reference>
<reference key="12">
    <citation type="journal article" date="2016" name="PLoS Genet.">
        <title>NPR-9, a galanin-like G-protein coupled receptor, and GLR-1 regulate interneuronal circuitry underlying multisensory integration of environmental cues in Caenorhabditis elegans.</title>
        <authorList>
            <person name="Campbell J.C."/>
            <person name="Polan-Couillard L.F."/>
            <person name="Chin-Sang I.D."/>
            <person name="Bendena W.G."/>
        </authorList>
    </citation>
    <scope>FUNCTION</scope>
    <scope>DISRUPTION PHENOTYPE</scope>
</reference>
<gene>
    <name evidence="14" type="primary">glr-1</name>
    <name evidence="14" type="ORF">C06E1.4</name>
</gene>
<protein>
    <recommendedName>
        <fullName evidence="14">Glutamate receptor 1</fullName>
    </recommendedName>
</protein>
<sequence>MFSSFSFLNMFGVLFTVFNLTVVQPYPSHIIIKSFGNNEEVSRVALKAMEYTSDHINSRDDVPFKLAFDHRVVEEGAAVSWNMVNAVCDELKEGAMALLSSVDGKGREGIRGVSDALEMPLVSLTALSNDDHQQQQFGNLFEVSVRPPISELLADFIVHKGWGEVLVLIDPVHASLHLPSLWRHLRTRTNTSVKASMFDLPADEKQFEAYLMQFNMMRNNETNRILIDCASPKRLKKLLINIRSAQFNQANYHYVLANYDFLPYDQEMFQNGNINISGFNIINKDGREYWSLKKHLKTSSSLGGGDDVSVEAAVGHDAMLVTWHGFAKCLQANDSLFHGTFRHRRFFNRGFPGIYCDPLSDRSHPNRPFSSFEHGKTIGVAFRNMKIGHKEGTLTGNIEFDRFGNRKNFDVSIVDLVSNTKATFNSKEVLAWRQGVGFFSNRTVAQHSRKSQNDHKDNQVIVLTNLVAPFVMIKRECLEMANLTECQGNNKFEGFCIDLLKLLADKIEEFNYEIKLGTKAGSKQADGSWDGMIGELLSGRAHAVVASLTINQERERVVDFSKPFMTTGISIMIKKPDKQEFSVFSFMQPLSTEIWMYIIFAYIGVSVVIFLVSRFSPYEWRVEETSRGGFTISNDFSVYNCLWFTLAAFMQQGTDILPRSISGRIASSAWWFFTMIIVSSYTANLAAFLTLEKMQAPIESVEDLAKQSKIKYGIQGGGSTASFFKYSSVQIYQRMWRYMESQVPPVFVASYAEGIERVRSHKGRYAFLLEATANEYENTRKPCDTMKVGANLNSIGYGIATPFGSDWKDHINLAILALQERGELKKLENKWWYDRGQCDAGITVDGSSASLNLSKVAGIFYILMGGMVISMLAALGEFLYRSRIEARKSNSNSMVANFAKNLKSALSSQLRLSVEGGAVAQPGSQSHNAIRRQQVAAFLPANEKEAFNNVDRPANTLYNTAV</sequence>
<dbReference type="EMBL" id="U34661">
    <property type="protein sequence ID" value="AAA92006.1"/>
    <property type="molecule type" value="mRNA"/>
</dbReference>
<dbReference type="EMBL" id="BX284603">
    <property type="protein sequence ID" value="CCD62564.1"/>
    <property type="molecule type" value="Genomic_DNA"/>
</dbReference>
<dbReference type="PIR" id="B88533">
    <property type="entry name" value="B88533"/>
</dbReference>
<dbReference type="PIR" id="S60225">
    <property type="entry name" value="S60225"/>
</dbReference>
<dbReference type="RefSeq" id="NP_498887.2">
    <property type="nucleotide sequence ID" value="NM_066486.6"/>
</dbReference>
<dbReference type="SMR" id="P34299"/>
<dbReference type="BioGRID" id="41408">
    <property type="interactions" value="9"/>
</dbReference>
<dbReference type="FunCoup" id="P34299">
    <property type="interactions" value="394"/>
</dbReference>
<dbReference type="IntAct" id="P34299">
    <property type="interactions" value="1"/>
</dbReference>
<dbReference type="STRING" id="6239.C06E1.4.1"/>
<dbReference type="TCDB" id="1.A.10.1.21">
    <property type="family name" value="the glutamate-gated ion channel (gic) family of neurotransmitter receptors"/>
</dbReference>
<dbReference type="GlyCosmos" id="P34299">
    <property type="glycosylation" value="7 sites, No reported glycans"/>
</dbReference>
<dbReference type="iPTMnet" id="P34299"/>
<dbReference type="PaxDb" id="6239-C06E1.4"/>
<dbReference type="EnsemblMetazoa" id="C06E1.4.1">
    <property type="protein sequence ID" value="C06E1.4.1"/>
    <property type="gene ID" value="WBGene00001612"/>
</dbReference>
<dbReference type="GeneID" id="176204"/>
<dbReference type="KEGG" id="cel:CELE_C06E1.4"/>
<dbReference type="UCSC" id="C06E1.4">
    <property type="organism name" value="c. elegans"/>
</dbReference>
<dbReference type="AGR" id="WB:WBGene00001612"/>
<dbReference type="CTD" id="176204"/>
<dbReference type="WormBase" id="C06E1.4">
    <property type="protein sequence ID" value="CE31407"/>
    <property type="gene ID" value="WBGene00001612"/>
    <property type="gene designation" value="glr-1"/>
</dbReference>
<dbReference type="eggNOG" id="KOG1054">
    <property type="taxonomic scope" value="Eukaryota"/>
</dbReference>
<dbReference type="GeneTree" id="ENSGT00940000168258"/>
<dbReference type="HOGENOM" id="CLU_007257_1_2_1"/>
<dbReference type="InParanoid" id="P34299"/>
<dbReference type="OMA" id="VMPPSTH"/>
<dbReference type="OrthoDB" id="5984008at2759"/>
<dbReference type="PhylomeDB" id="P34299"/>
<dbReference type="Reactome" id="R-CEL-204005">
    <property type="pathway name" value="COPII-mediated vesicle transport"/>
</dbReference>
<dbReference type="Reactome" id="R-CEL-399710">
    <property type="pathway name" value="Activation of AMPA receptors"/>
</dbReference>
<dbReference type="Reactome" id="R-CEL-438066">
    <property type="pathway name" value="Unblocking of NMDA receptors, glutamate binding and activation"/>
</dbReference>
<dbReference type="Reactome" id="R-CEL-5694530">
    <property type="pathway name" value="Cargo concentration in the ER"/>
</dbReference>
<dbReference type="Reactome" id="R-CEL-8849932">
    <property type="pathway name" value="Synaptic adhesion-like molecules"/>
</dbReference>
<dbReference type="PRO" id="PR:P34299"/>
<dbReference type="Proteomes" id="UP000001940">
    <property type="component" value="Chromosome III"/>
</dbReference>
<dbReference type="Bgee" id="WBGene00001612">
    <property type="expression patterns" value="Expressed in pharyngeal muscle cell (C elegans) and 3 other cell types or tissues"/>
</dbReference>
<dbReference type="GO" id="GO:0009986">
    <property type="term" value="C:cell surface"/>
    <property type="evidence" value="ECO:0000314"/>
    <property type="project" value="UniProtKB"/>
</dbReference>
<dbReference type="GO" id="GO:0030425">
    <property type="term" value="C:dendrite"/>
    <property type="evidence" value="ECO:0000314"/>
    <property type="project" value="WormBase"/>
</dbReference>
<dbReference type="GO" id="GO:0008328">
    <property type="term" value="C:ionotropic glutamate receptor complex"/>
    <property type="evidence" value="ECO:0000353"/>
    <property type="project" value="WormBase"/>
</dbReference>
<dbReference type="GO" id="GO:0043005">
    <property type="term" value="C:neuron projection"/>
    <property type="evidence" value="ECO:0000314"/>
    <property type="project" value="WormBase"/>
</dbReference>
<dbReference type="GO" id="GO:0032589">
    <property type="term" value="C:neuron projection membrane"/>
    <property type="evidence" value="ECO:0000314"/>
    <property type="project" value="WormBase"/>
</dbReference>
<dbReference type="GO" id="GO:0043025">
    <property type="term" value="C:neuronal cell body"/>
    <property type="evidence" value="ECO:0000314"/>
    <property type="project" value="UniProtKB"/>
</dbReference>
<dbReference type="GO" id="GO:0043204">
    <property type="term" value="C:perikaryon"/>
    <property type="evidence" value="ECO:0007669"/>
    <property type="project" value="UniProtKB-SubCell"/>
</dbReference>
<dbReference type="GO" id="GO:0097038">
    <property type="term" value="C:perinuclear endoplasmic reticulum"/>
    <property type="evidence" value="ECO:0000314"/>
    <property type="project" value="UniProtKB"/>
</dbReference>
<dbReference type="GO" id="GO:0005886">
    <property type="term" value="C:plasma membrane"/>
    <property type="evidence" value="ECO:0000314"/>
    <property type="project" value="WormBase"/>
</dbReference>
<dbReference type="GO" id="GO:0014069">
    <property type="term" value="C:postsynaptic density"/>
    <property type="evidence" value="ECO:0000314"/>
    <property type="project" value="WormBase"/>
</dbReference>
<dbReference type="GO" id="GO:0098839">
    <property type="term" value="C:postsynaptic density membrane"/>
    <property type="evidence" value="ECO:0000318"/>
    <property type="project" value="GO_Central"/>
</dbReference>
<dbReference type="GO" id="GO:0045211">
    <property type="term" value="C:postsynaptic membrane"/>
    <property type="evidence" value="ECO:0000314"/>
    <property type="project" value="UniProtKB"/>
</dbReference>
<dbReference type="GO" id="GO:0055037">
    <property type="term" value="C:recycling endosome"/>
    <property type="evidence" value="ECO:0007669"/>
    <property type="project" value="UniProtKB-SubCell"/>
</dbReference>
<dbReference type="GO" id="GO:0045202">
    <property type="term" value="C:synapse"/>
    <property type="evidence" value="ECO:0000314"/>
    <property type="project" value="UniProtKB"/>
</dbReference>
<dbReference type="GO" id="GO:0004971">
    <property type="term" value="F:AMPA glutamate receptor activity"/>
    <property type="evidence" value="ECO:0000250"/>
    <property type="project" value="WormBase"/>
</dbReference>
<dbReference type="GO" id="GO:0019899">
    <property type="term" value="F:enzyme binding"/>
    <property type="evidence" value="ECO:0000353"/>
    <property type="project" value="WormBase"/>
</dbReference>
<dbReference type="GO" id="GO:0008066">
    <property type="term" value="F:glutamate receptor activity"/>
    <property type="evidence" value="ECO:0000318"/>
    <property type="project" value="GO_Central"/>
</dbReference>
<dbReference type="GO" id="GO:0004970">
    <property type="term" value="F:glutamate-gated receptor activity"/>
    <property type="evidence" value="ECO:0000314"/>
    <property type="project" value="WormBase"/>
</dbReference>
<dbReference type="GO" id="GO:1904315">
    <property type="term" value="F:transmitter-gated monoatomic ion channel activity involved in regulation of postsynaptic membrane potential"/>
    <property type="evidence" value="ECO:0000318"/>
    <property type="project" value="GO_Central"/>
</dbReference>
<dbReference type="GO" id="GO:0008344">
    <property type="term" value="P:adult locomotory behavior"/>
    <property type="evidence" value="ECO:0000315"/>
    <property type="project" value="UniProtKB"/>
</dbReference>
<dbReference type="GO" id="GO:0008306">
    <property type="term" value="P:associative learning"/>
    <property type="evidence" value="ECO:0000315"/>
    <property type="project" value="WormBase"/>
</dbReference>
<dbReference type="GO" id="GO:0007631">
    <property type="term" value="P:feeding behavior"/>
    <property type="evidence" value="ECO:0000315"/>
    <property type="project" value="WormBase"/>
</dbReference>
<dbReference type="GO" id="GO:0043056">
    <property type="term" value="P:forward locomotion"/>
    <property type="evidence" value="ECO:0000315"/>
    <property type="project" value="UniProtKB"/>
</dbReference>
<dbReference type="GO" id="GO:0046959">
    <property type="term" value="P:habituation"/>
    <property type="evidence" value="ECO:0000315"/>
    <property type="project" value="WormBase"/>
</dbReference>
<dbReference type="GO" id="GO:0006972">
    <property type="term" value="P:hyperosmotic response"/>
    <property type="evidence" value="ECO:0000315"/>
    <property type="project" value="UniProtKB"/>
</dbReference>
<dbReference type="GO" id="GO:0035235">
    <property type="term" value="P:ionotropic glutamate receptor signaling pathway"/>
    <property type="evidence" value="ECO:0000250"/>
    <property type="project" value="WormBase"/>
</dbReference>
<dbReference type="GO" id="GO:0050804">
    <property type="term" value="P:modulation of chemical synaptic transmission"/>
    <property type="evidence" value="ECO:0000318"/>
    <property type="project" value="GO_Central"/>
</dbReference>
<dbReference type="GO" id="GO:1905852">
    <property type="term" value="P:positive regulation of backward locomotion"/>
    <property type="evidence" value="ECO:0000315"/>
    <property type="project" value="UniProtKB"/>
</dbReference>
<dbReference type="GO" id="GO:1905850">
    <property type="term" value="P:positive regulation of forward locomotion"/>
    <property type="evidence" value="ECO:0000316"/>
    <property type="project" value="UniProtKB"/>
</dbReference>
<dbReference type="GO" id="GO:0043058">
    <property type="term" value="P:regulation of backward locomotion"/>
    <property type="evidence" value="ECO:0000315"/>
    <property type="project" value="WormBase"/>
</dbReference>
<dbReference type="GO" id="GO:0009612">
    <property type="term" value="P:response to mechanical stimulus"/>
    <property type="evidence" value="ECO:0000315"/>
    <property type="project" value="UniProtKB"/>
</dbReference>
<dbReference type="GO" id="GO:0050913">
    <property type="term" value="P:sensory perception of bitter taste"/>
    <property type="evidence" value="ECO:0000315"/>
    <property type="project" value="WormBase"/>
</dbReference>
<dbReference type="GO" id="GO:0007614">
    <property type="term" value="P:short-term memory"/>
    <property type="evidence" value="ECO:0000315"/>
    <property type="project" value="WormBase"/>
</dbReference>
<dbReference type="GO" id="GO:0035249">
    <property type="term" value="P:synaptic transmission, glutamatergic"/>
    <property type="evidence" value="ECO:0000314"/>
    <property type="project" value="WormBase"/>
</dbReference>
<dbReference type="GO" id="GO:0001966">
    <property type="term" value="P:thigmotaxis"/>
    <property type="evidence" value="ECO:0000315"/>
    <property type="project" value="WormBase"/>
</dbReference>
<dbReference type="CDD" id="cd06380">
    <property type="entry name" value="PBP1_iGluR_AMPA"/>
    <property type="match status" value="1"/>
</dbReference>
<dbReference type="FunFam" id="3.40.190.10:FF:000189">
    <property type="entry name" value="Glutamate receptor 1"/>
    <property type="match status" value="1"/>
</dbReference>
<dbReference type="FunFam" id="3.40.190.10:FF:000241">
    <property type="entry name" value="Glutamate receptor 2"/>
    <property type="match status" value="1"/>
</dbReference>
<dbReference type="FunFam" id="1.10.287.70:FF:000064">
    <property type="entry name" value="Glutamate receptor ionotropic, kainate"/>
    <property type="match status" value="1"/>
</dbReference>
<dbReference type="Gene3D" id="1.10.287.70">
    <property type="match status" value="1"/>
</dbReference>
<dbReference type="Gene3D" id="3.40.50.2300">
    <property type="match status" value="2"/>
</dbReference>
<dbReference type="Gene3D" id="3.40.190.10">
    <property type="entry name" value="Periplasmic binding protein-like II"/>
    <property type="match status" value="2"/>
</dbReference>
<dbReference type="InterPro" id="IPR001828">
    <property type="entry name" value="ANF_lig-bd_rcpt"/>
</dbReference>
<dbReference type="InterPro" id="IPR019594">
    <property type="entry name" value="Glu/Gly-bd"/>
</dbReference>
<dbReference type="InterPro" id="IPR001508">
    <property type="entry name" value="Iono_Glu_rcpt_met"/>
</dbReference>
<dbReference type="InterPro" id="IPR015683">
    <property type="entry name" value="Ionotropic_Glu_rcpt"/>
</dbReference>
<dbReference type="InterPro" id="IPR001320">
    <property type="entry name" value="Iontro_rcpt_C"/>
</dbReference>
<dbReference type="InterPro" id="IPR028082">
    <property type="entry name" value="Peripla_BP_I"/>
</dbReference>
<dbReference type="InterPro" id="IPR001638">
    <property type="entry name" value="Solute-binding_3/MltF_N"/>
</dbReference>
<dbReference type="PANTHER" id="PTHR18966">
    <property type="entry name" value="IONOTROPIC GLUTAMATE RECEPTOR"/>
    <property type="match status" value="1"/>
</dbReference>
<dbReference type="Pfam" id="PF01094">
    <property type="entry name" value="ANF_receptor"/>
    <property type="match status" value="1"/>
</dbReference>
<dbReference type="Pfam" id="PF00060">
    <property type="entry name" value="Lig_chan"/>
    <property type="match status" value="1"/>
</dbReference>
<dbReference type="Pfam" id="PF10613">
    <property type="entry name" value="Lig_chan-Glu_bd"/>
    <property type="match status" value="1"/>
</dbReference>
<dbReference type="PRINTS" id="PR00177">
    <property type="entry name" value="NMDARECEPTOR"/>
</dbReference>
<dbReference type="SMART" id="SM00918">
    <property type="entry name" value="Lig_chan-Glu_bd"/>
    <property type="match status" value="1"/>
</dbReference>
<dbReference type="SMART" id="SM00062">
    <property type="entry name" value="PBPb"/>
    <property type="match status" value="1"/>
</dbReference>
<dbReference type="SMART" id="SM00079">
    <property type="entry name" value="PBPe"/>
    <property type="match status" value="1"/>
</dbReference>
<dbReference type="SUPFAM" id="SSF53822">
    <property type="entry name" value="Periplasmic binding protein-like I"/>
    <property type="match status" value="1"/>
</dbReference>
<dbReference type="SUPFAM" id="SSF53850">
    <property type="entry name" value="Periplasmic binding protein-like II"/>
    <property type="match status" value="1"/>
</dbReference>
<feature type="signal peptide" evidence="1">
    <location>
        <begin position="1"/>
        <end position="25"/>
    </location>
</feature>
<feature type="chain" id="PRO_0000011590" description="Glutamate receptor 1">
    <location>
        <begin position="26"/>
        <end position="962"/>
    </location>
</feature>
<feature type="topological domain" description="Extracellular" evidence="1">
    <location>
        <begin position="26"/>
        <end position="591"/>
    </location>
</feature>
<feature type="transmembrane region" description="Helical" evidence="1">
    <location>
        <begin position="592"/>
        <end position="612"/>
    </location>
</feature>
<feature type="topological domain" description="Cytoplasmic" evidence="1">
    <location>
        <begin position="613"/>
        <end position="668"/>
    </location>
</feature>
<feature type="transmembrane region" description="Helical" evidence="1">
    <location>
        <begin position="669"/>
        <end position="689"/>
    </location>
</feature>
<feature type="topological domain" description="Extracellular" evidence="1">
    <location>
        <begin position="690"/>
        <end position="855"/>
    </location>
</feature>
<feature type="transmembrane region" description="Helical" evidence="1">
    <location>
        <begin position="856"/>
        <end position="876"/>
    </location>
</feature>
<feature type="topological domain" description="Cytoplasmic" evidence="1">
    <location>
        <begin position="877"/>
        <end position="962"/>
    </location>
</feature>
<feature type="glycosylation site" description="N-linked (GlcNAc...) asparagine" evidence="1">
    <location>
        <position position="190"/>
    </location>
</feature>
<feature type="glycosylation site" description="N-linked (GlcNAc...) asparagine" evidence="1">
    <location>
        <position position="220"/>
    </location>
</feature>
<feature type="glycosylation site" description="N-linked (GlcNAc...) asparagine" evidence="1">
    <location>
        <position position="275"/>
    </location>
</feature>
<feature type="glycosylation site" description="N-linked (GlcNAc...) asparagine" evidence="1">
    <location>
        <position position="333"/>
    </location>
</feature>
<feature type="glycosylation site" description="N-linked (GlcNAc...) asparagine" evidence="1">
    <location>
        <position position="441"/>
    </location>
</feature>
<feature type="glycosylation site" description="N-linked (GlcNAc...) asparagine" evidence="1">
    <location>
        <position position="482"/>
    </location>
</feature>
<feature type="glycosylation site" description="N-linked (GlcNAc...) asparagine" evidence="1">
    <location>
        <position position="852"/>
    </location>
</feature>
<feature type="mutagenesis site" description="Increased levels of glr-1." evidence="3">
    <original>K</original>
    <variation>R</variation>
    <location>
        <position position="888"/>
    </location>
</feature>
<organism>
    <name type="scientific">Caenorhabditis elegans</name>
    <dbReference type="NCBI Taxonomy" id="6239"/>
    <lineage>
        <taxon>Eukaryota</taxon>
        <taxon>Metazoa</taxon>
        <taxon>Ecdysozoa</taxon>
        <taxon>Nematoda</taxon>
        <taxon>Chromadorea</taxon>
        <taxon>Rhabditida</taxon>
        <taxon>Rhabditina</taxon>
        <taxon>Rhabditomorpha</taxon>
        <taxon>Rhabditoidea</taxon>
        <taxon>Rhabditidae</taxon>
        <taxon>Peloderinae</taxon>
        <taxon>Caenorhabditis</taxon>
    </lineage>
</organism>
<comment type="function">
    <text evidence="10 11">Non-NMDA (N-methyl-D-aspartate) ionotropic glutamate receptor (PubMed:7477293). L-glutamate acts as an excitatory neurotransmitter at many synapses in the central nervous system (PubMed:7477293). The postsynaptic actions of glutamate are mediated by a variety of receptors that are named according to their selective agonists (PubMed:7477293). May contribute to a sensory discrimination between mechanical and chemical stimuli (PubMed:7477293). Plays a role in controlling movement in response to environmental cues such as food availability and mechanosensory stimulation such as the nose touch response (PubMed:27223098). In AIB interneurons, promotes omega turns, a movement that frequently follows backwards locomotion or 'reversals' in response to environmental cues while possibly playing an inhibitory role in alternative neurons to inhibit omega turns (PubMed:27223098).</text>
</comment>
<comment type="subunit">
    <text evidence="4 8 9">Interacts with sol-1 (PubMed:14749834). Interacts with cni-1; the interaction negatively regulates export of glr-1 from the endoplasmic reticulum to synapses (PubMed:24094107). Interacts with usp-46; the interaction results in deubiquitination of glr-1 (PubMed:24356955).</text>
</comment>
<comment type="interaction">
    <interactant intactId="EBI-15564936">
        <id>P34299</id>
    </interactant>
    <interactant intactId="EBI-15564914">
        <id>Q93212</id>
        <label>sol-1</label>
    </interactant>
    <organismsDiffer>false</organismsDiffer>
    <experiments>2</experiments>
</comment>
<comment type="subcellular location">
    <subcellularLocation>
        <location evidence="3 9">Postsynaptic cell membrane</location>
        <topology evidence="3 9">Multi-pass membrane protein</topology>
    </subcellularLocation>
    <subcellularLocation>
        <location evidence="8">Endoplasmic reticulum</location>
    </subcellularLocation>
    <subcellularLocation>
        <location evidence="5">Synapse</location>
    </subcellularLocation>
    <subcellularLocation>
        <location evidence="5 7">Cell membrane</location>
    </subcellularLocation>
    <subcellularLocation>
        <location evidence="5 7">Recycling endosome</location>
    </subcellularLocation>
    <subcellularLocation>
        <location evidence="6">Cell projection</location>
        <location evidence="6">Dendrite</location>
    </subcellularLocation>
    <subcellularLocation>
        <location evidence="6">Perikaryon</location>
    </subcellularLocation>
    <text evidence="5 6 7">Partially co-localizes with lin-10 at synapses (PubMed:17671168). Trafficking between the plasma membrane and recycling endosomes in the ventral nerve cord is regulated by lin-10 (PubMed:17671168, PubMed:22252129). During hypoxia, accumulates in enlarged endosome-like compartments (PubMed:22252129). Co-localizes with rab-6.2 at or near punctate structures in the neuron cell body and along the ventral cord dendrites (PubMed:22213799).</text>
</comment>
<comment type="tissue specificity">
    <text evidence="2 11">Command interneurons of the locomotory control circuit (AIB, AVA, AVB, AVD, AVE and PVC) and motor neurons (RMD, RIM, SMD, AVG, PVQ and URY).</text>
</comment>
<comment type="PTM">
    <text evidence="3 9">Ubiquitinated. Deubiquitinated by usp-46 which prevents its degradation.</text>
</comment>
<comment type="PTM">
    <text evidence="12">Glycosylated.</text>
</comment>
<comment type="disruption phenotype">
    <text evidence="8 10">Decreased frequency of reversals, suppression of hyperreversal phenotype of cni-1 mutants, decreased tactile response and increased osmotic avoidance (PubMed:24094107). Overall, display increased omega turn frequency following reversals, however deletion in AIB interneurons specifically results in decreased omega turn frequency (PubMed:27223098). Decreased nose touch responses (PubMed:27223098).</text>
</comment>
<comment type="similarity">
    <text evidence="13">Belongs to the glutamate-gated ion channel (TC 1.A.10.1) family.</text>
</comment>
<keyword id="KW-1003">Cell membrane</keyword>
<keyword id="KW-0966">Cell projection</keyword>
<keyword id="KW-0256">Endoplasmic reticulum</keyword>
<keyword id="KW-0967">Endosome</keyword>
<keyword id="KW-0325">Glycoprotein</keyword>
<keyword id="KW-0407">Ion channel</keyword>
<keyword id="KW-0406">Ion transport</keyword>
<keyword id="KW-1071">Ligand-gated ion channel</keyword>
<keyword id="KW-0472">Membrane</keyword>
<keyword id="KW-0628">Postsynaptic cell membrane</keyword>
<keyword id="KW-0675">Receptor</keyword>
<keyword id="KW-1185">Reference proteome</keyword>
<keyword id="KW-0732">Signal</keyword>
<keyword id="KW-0770">Synapse</keyword>
<keyword id="KW-0812">Transmembrane</keyword>
<keyword id="KW-1133">Transmembrane helix</keyword>
<keyword id="KW-0813">Transport</keyword>
<keyword id="KW-0832">Ubl conjugation</keyword>
<proteinExistence type="evidence at protein level"/>
<name>GLR1_CAEEL</name>
<accession>P34299</accession>
<accession>Q17363</accession>
<evidence type="ECO:0000255" key="1"/>
<evidence type="ECO:0000269" key="2">
    <source>
    </source>
</evidence>
<evidence type="ECO:0000269" key="3">
    <source>
    </source>
</evidence>
<evidence type="ECO:0000269" key="4">
    <source>
    </source>
</evidence>
<evidence type="ECO:0000269" key="5">
    <source>
    </source>
</evidence>
<evidence type="ECO:0000269" key="6">
    <source>
    </source>
</evidence>
<evidence type="ECO:0000269" key="7">
    <source>
    </source>
</evidence>
<evidence type="ECO:0000269" key="8">
    <source>
    </source>
</evidence>
<evidence type="ECO:0000269" key="9">
    <source>
    </source>
</evidence>
<evidence type="ECO:0000269" key="10">
    <source>
    </source>
</evidence>
<evidence type="ECO:0000269" key="11">
    <source>
    </source>
</evidence>
<evidence type="ECO:0000303" key="12">
    <source>
    </source>
</evidence>
<evidence type="ECO:0000305" key="13"/>
<evidence type="ECO:0000312" key="14">
    <source>
        <dbReference type="WormBase" id="C06E1.4"/>
    </source>
</evidence>